<name>PSAA_CALFG</name>
<dbReference type="EC" id="1.97.1.12" evidence="1"/>
<dbReference type="EMBL" id="AJ428413">
    <property type="protein sequence ID" value="CAD28721.1"/>
    <property type="molecule type" value="Genomic_DNA"/>
</dbReference>
<dbReference type="RefSeq" id="NP_862754.1">
    <property type="nucleotide sequence ID" value="NC_004993.1"/>
</dbReference>
<dbReference type="SMR" id="Q7YJX2"/>
<dbReference type="GeneID" id="2598000"/>
<dbReference type="GO" id="GO:0009535">
    <property type="term" value="C:chloroplast thylakoid membrane"/>
    <property type="evidence" value="ECO:0007669"/>
    <property type="project" value="UniProtKB-SubCell"/>
</dbReference>
<dbReference type="GO" id="GO:0009522">
    <property type="term" value="C:photosystem I"/>
    <property type="evidence" value="ECO:0007669"/>
    <property type="project" value="UniProtKB-KW"/>
</dbReference>
<dbReference type="GO" id="GO:0051539">
    <property type="term" value="F:4 iron, 4 sulfur cluster binding"/>
    <property type="evidence" value="ECO:0007669"/>
    <property type="project" value="UniProtKB-KW"/>
</dbReference>
<dbReference type="GO" id="GO:0016168">
    <property type="term" value="F:chlorophyll binding"/>
    <property type="evidence" value="ECO:0007669"/>
    <property type="project" value="UniProtKB-KW"/>
</dbReference>
<dbReference type="GO" id="GO:0009055">
    <property type="term" value="F:electron transfer activity"/>
    <property type="evidence" value="ECO:0007669"/>
    <property type="project" value="UniProtKB-UniRule"/>
</dbReference>
<dbReference type="GO" id="GO:0000287">
    <property type="term" value="F:magnesium ion binding"/>
    <property type="evidence" value="ECO:0007669"/>
    <property type="project" value="UniProtKB-UniRule"/>
</dbReference>
<dbReference type="GO" id="GO:0016491">
    <property type="term" value="F:oxidoreductase activity"/>
    <property type="evidence" value="ECO:0007669"/>
    <property type="project" value="UniProtKB-KW"/>
</dbReference>
<dbReference type="GO" id="GO:0015979">
    <property type="term" value="P:photosynthesis"/>
    <property type="evidence" value="ECO:0007669"/>
    <property type="project" value="UniProtKB-UniRule"/>
</dbReference>
<dbReference type="FunFam" id="1.20.1130.10:FF:000001">
    <property type="entry name" value="Photosystem I P700 chlorophyll a apoprotein A2"/>
    <property type="match status" value="1"/>
</dbReference>
<dbReference type="Gene3D" id="1.20.1130.10">
    <property type="entry name" value="Photosystem I PsaA/PsaB"/>
    <property type="match status" value="1"/>
</dbReference>
<dbReference type="HAMAP" id="MF_00458">
    <property type="entry name" value="PSI_PsaA"/>
    <property type="match status" value="1"/>
</dbReference>
<dbReference type="InterPro" id="IPR006243">
    <property type="entry name" value="PSI_PsaA"/>
</dbReference>
<dbReference type="InterPro" id="IPR001280">
    <property type="entry name" value="PSI_PsaA/B"/>
</dbReference>
<dbReference type="InterPro" id="IPR020586">
    <property type="entry name" value="PSI_PsaA/B_CS"/>
</dbReference>
<dbReference type="InterPro" id="IPR036408">
    <property type="entry name" value="PSI_PsaA/B_sf"/>
</dbReference>
<dbReference type="NCBIfam" id="TIGR01335">
    <property type="entry name" value="psaA"/>
    <property type="match status" value="1"/>
</dbReference>
<dbReference type="PANTHER" id="PTHR30128">
    <property type="entry name" value="OUTER MEMBRANE PROTEIN, OMPA-RELATED"/>
    <property type="match status" value="1"/>
</dbReference>
<dbReference type="PANTHER" id="PTHR30128:SF19">
    <property type="entry name" value="PHOTOSYSTEM I P700 CHLOROPHYLL A APOPROTEIN A1-RELATED"/>
    <property type="match status" value="1"/>
</dbReference>
<dbReference type="Pfam" id="PF00223">
    <property type="entry name" value="PsaA_PsaB"/>
    <property type="match status" value="1"/>
</dbReference>
<dbReference type="PIRSF" id="PIRSF002905">
    <property type="entry name" value="PSI_A"/>
    <property type="match status" value="1"/>
</dbReference>
<dbReference type="PRINTS" id="PR00257">
    <property type="entry name" value="PHOTSYSPSAAB"/>
</dbReference>
<dbReference type="SUPFAM" id="SSF81558">
    <property type="entry name" value="Photosystem I subunits PsaA/PsaB"/>
    <property type="match status" value="1"/>
</dbReference>
<dbReference type="PROSITE" id="PS00419">
    <property type="entry name" value="PHOTOSYSTEM_I_PSAAB"/>
    <property type="match status" value="1"/>
</dbReference>
<feature type="chain" id="PRO_0000088537" description="Photosystem I P700 chlorophyll a apoprotein A1">
    <location>
        <begin position="1"/>
        <end position="750"/>
    </location>
</feature>
<feature type="transmembrane region" description="Helical; Name=I" evidence="1">
    <location>
        <begin position="70"/>
        <end position="93"/>
    </location>
</feature>
<feature type="transmembrane region" description="Helical; Name=II" evidence="1">
    <location>
        <begin position="156"/>
        <end position="179"/>
    </location>
</feature>
<feature type="transmembrane region" description="Helical; Name=III" evidence="1">
    <location>
        <begin position="195"/>
        <end position="219"/>
    </location>
</feature>
<feature type="transmembrane region" description="Helical; Name=IV" evidence="1">
    <location>
        <begin position="291"/>
        <end position="309"/>
    </location>
</feature>
<feature type="transmembrane region" description="Helical; Name=V" evidence="1">
    <location>
        <begin position="346"/>
        <end position="369"/>
    </location>
</feature>
<feature type="transmembrane region" description="Helical; Name=VI" evidence="1">
    <location>
        <begin position="385"/>
        <end position="411"/>
    </location>
</feature>
<feature type="transmembrane region" description="Helical; Name=VII" evidence="1">
    <location>
        <begin position="433"/>
        <end position="455"/>
    </location>
</feature>
<feature type="transmembrane region" description="Helical; Name=VIII" evidence="1">
    <location>
        <begin position="531"/>
        <end position="549"/>
    </location>
</feature>
<feature type="transmembrane region" description="Helical; Name=IX" evidence="1">
    <location>
        <begin position="589"/>
        <end position="610"/>
    </location>
</feature>
<feature type="transmembrane region" description="Helical; Name=X" evidence="1">
    <location>
        <begin position="664"/>
        <end position="686"/>
    </location>
</feature>
<feature type="transmembrane region" description="Helical; Name=XI" evidence="1">
    <location>
        <begin position="724"/>
        <end position="744"/>
    </location>
</feature>
<feature type="binding site" evidence="1">
    <location>
        <position position="573"/>
    </location>
    <ligand>
        <name>[4Fe-4S] cluster</name>
        <dbReference type="ChEBI" id="CHEBI:49883"/>
        <note>ligand shared between dimeric partners</note>
    </ligand>
</feature>
<feature type="binding site" evidence="1">
    <location>
        <position position="582"/>
    </location>
    <ligand>
        <name>[4Fe-4S] cluster</name>
        <dbReference type="ChEBI" id="CHEBI:49883"/>
        <note>ligand shared between dimeric partners</note>
    </ligand>
</feature>
<feature type="binding site" description="axial binding residue" evidence="1">
    <location>
        <position position="675"/>
    </location>
    <ligand>
        <name>chlorophyll a'</name>
        <dbReference type="ChEBI" id="CHEBI:189419"/>
        <label>A1</label>
    </ligand>
    <ligandPart>
        <name>Mg</name>
        <dbReference type="ChEBI" id="CHEBI:25107"/>
    </ligandPart>
</feature>
<feature type="binding site" description="axial binding residue" evidence="1">
    <location>
        <position position="683"/>
    </location>
    <ligand>
        <name>chlorophyll a</name>
        <dbReference type="ChEBI" id="CHEBI:58416"/>
        <label>A3</label>
    </ligand>
    <ligandPart>
        <name>Mg</name>
        <dbReference type="ChEBI" id="CHEBI:25107"/>
    </ligandPart>
</feature>
<feature type="binding site" evidence="1">
    <location>
        <position position="691"/>
    </location>
    <ligand>
        <name>chlorophyll a</name>
        <dbReference type="ChEBI" id="CHEBI:58416"/>
        <label>A3</label>
    </ligand>
</feature>
<feature type="binding site" evidence="1">
    <location>
        <position position="692"/>
    </location>
    <ligand>
        <name>phylloquinone</name>
        <dbReference type="ChEBI" id="CHEBI:18067"/>
        <label>A</label>
    </ligand>
</feature>
<organism>
    <name type="scientific">Calycanthus floridus var. glaucus</name>
    <name type="common">Eastern sweetshrub</name>
    <name type="synonym">Calycanthus fertilis var. ferax</name>
    <dbReference type="NCBI Taxonomy" id="212734"/>
    <lineage>
        <taxon>Eukaryota</taxon>
        <taxon>Viridiplantae</taxon>
        <taxon>Streptophyta</taxon>
        <taxon>Embryophyta</taxon>
        <taxon>Tracheophyta</taxon>
        <taxon>Spermatophyta</taxon>
        <taxon>Magnoliopsida</taxon>
        <taxon>Magnoliidae</taxon>
        <taxon>Laurales</taxon>
        <taxon>Calycanthaceae</taxon>
        <taxon>Calycanthus</taxon>
    </lineage>
</organism>
<sequence length="750" mass="83071">MIIRSPESEVKIMVDRDPIKTSFEEWARPGHFSRTIAKGPDTTTWIWNLHADAHDFDSHTSDLEEISRKVFSAHFGQLSIIFLWLSGMYFHGARFSNYEAWLSDPTHIGPSAQVVWPIVGQEILNGDVGGGFRGIQITSGFFQLWRASGITNELQLYCTAIGALVFAALMLFAGWFHYHKAAPKLAWFQDVESMLNHHLAGLLGLGSLSWAGHQVHVSLPINQFLDAGVDPKEIPLPHEFILNRDLLAQLYPSFAEGATPFFTLNWSKYADFLSFRGGLDPVTGGLWLTDIAHHHLAIAILFLVAGHMYKTNWGIGHSLKDILEAHKGPFTGQGHKGLYEILTTSWHAQLSLNLAMLGSSTIVVAHHMYSMPPYPYLAIDYGTQLSLFTHHMWIGGFLIVGAAAHAAIFMVRDYDPTTRYNDLLDRVLRHRDAIISHLNWACIFLGFHSFGLYIHNDTMSALGRPQDMFSDTAIQLQPIFAQWVQNTHALAPSATAPGATASTSLTWGGGDLVAVGGKVALLPIPLGTADFLVHHIHAFTIHVTVLILLKGVLFARSSRLIPDKANLGFRFPCDGPGRGGTCQVSAWDHVFLGLFWMYNAISVVIFHFSWKMQSDVWGSISDQGVVTHITGGNFAQSSITINGWLRDFLWAQASQVIQSYGSSLSAYGLFFLGAHFVWAFSLMFLFSGRGYWQELIESIVWAHNKLKVAPATQPRALSIVQGRAVGVTHYLLGGIATTWAFFLARIIAVG</sequence>
<comment type="function">
    <text>PsaA and PsaB bind P700, the primary electron donor of photosystem I (PSI), as well as the electron acceptors A0, A1 and FX. PSI is a plastocyanin-ferredoxin oxidoreductase, converting photonic excitation into a charge separation, which transfers an electron from the donor P700 chlorophyll pair to the spectroscopically characterized acceptors A0, A1, FX, FA and FB in turn. Oxidized P700 is reduced on the lumenal side of the thylakoid membrane by plastocyanin.</text>
</comment>
<comment type="catalytic activity">
    <reaction evidence="1">
        <text>reduced [plastocyanin] + hnu + oxidized [2Fe-2S]-[ferredoxin] = oxidized [plastocyanin] + reduced [2Fe-2S]-[ferredoxin]</text>
        <dbReference type="Rhea" id="RHEA:30407"/>
        <dbReference type="Rhea" id="RHEA-COMP:10000"/>
        <dbReference type="Rhea" id="RHEA-COMP:10001"/>
        <dbReference type="Rhea" id="RHEA-COMP:10039"/>
        <dbReference type="Rhea" id="RHEA-COMP:10040"/>
        <dbReference type="ChEBI" id="CHEBI:29036"/>
        <dbReference type="ChEBI" id="CHEBI:30212"/>
        <dbReference type="ChEBI" id="CHEBI:33737"/>
        <dbReference type="ChEBI" id="CHEBI:33738"/>
        <dbReference type="ChEBI" id="CHEBI:49552"/>
        <dbReference type="EC" id="1.97.1.12"/>
    </reaction>
</comment>
<comment type="cofactor">
    <text evidence="1">P700 is a chlorophyll a/chlorophyll a' dimer, A0 is one or more chlorophyll a, A1 is one or both phylloquinones and FX is a shared 4Fe-4S iron-sulfur center.</text>
</comment>
<comment type="subunit">
    <text evidence="1">The PsaA/B heterodimer binds the P700 chlorophyll special pair and subsequent electron acceptors. PSI consists of a core antenna complex that captures photons, and an electron transfer chain that converts photonic excitation into a charge separation. The eukaryotic PSI reaction center is composed of at least 11 subunits.</text>
</comment>
<comment type="subcellular location">
    <subcellularLocation>
        <location evidence="1">Plastid</location>
        <location evidence="1">Chloroplast thylakoid membrane</location>
        <topology evidence="1">Multi-pass membrane protein</topology>
    </subcellularLocation>
</comment>
<comment type="similarity">
    <text evidence="1">Belongs to the PsaA/PsaB family.</text>
</comment>
<keyword id="KW-0004">4Fe-4S</keyword>
<keyword id="KW-0148">Chlorophyll</keyword>
<keyword id="KW-0150">Chloroplast</keyword>
<keyword id="KW-0157">Chromophore</keyword>
<keyword id="KW-0249">Electron transport</keyword>
<keyword id="KW-0408">Iron</keyword>
<keyword id="KW-0411">Iron-sulfur</keyword>
<keyword id="KW-0460">Magnesium</keyword>
<keyword id="KW-0472">Membrane</keyword>
<keyword id="KW-0479">Metal-binding</keyword>
<keyword id="KW-0560">Oxidoreductase</keyword>
<keyword id="KW-0602">Photosynthesis</keyword>
<keyword id="KW-0603">Photosystem I</keyword>
<keyword id="KW-0934">Plastid</keyword>
<keyword id="KW-0793">Thylakoid</keyword>
<keyword id="KW-0812">Transmembrane</keyword>
<keyword id="KW-1133">Transmembrane helix</keyword>
<keyword id="KW-0813">Transport</keyword>
<evidence type="ECO:0000255" key="1">
    <source>
        <dbReference type="HAMAP-Rule" id="MF_00458"/>
    </source>
</evidence>
<proteinExistence type="inferred from homology"/>
<accession>Q7YJX2</accession>
<gene>
    <name evidence="1" type="primary">psaA</name>
</gene>
<reference key="1">
    <citation type="journal article" date="2003" name="Plant Syst. Evol.">
        <title>The chloroplast genome of the 'basal' angiosperm Calycanthus fertilis -- structural and phylogenetic analyses.</title>
        <authorList>
            <person name="Goremykin V."/>
            <person name="Hirsch-Ernst K.I."/>
            <person name="Woelfl S."/>
            <person name="Hellwig F.H."/>
        </authorList>
    </citation>
    <scope>NUCLEOTIDE SEQUENCE [LARGE SCALE GENOMIC DNA]</scope>
</reference>
<geneLocation type="chloroplast"/>
<protein>
    <recommendedName>
        <fullName evidence="1">Photosystem I P700 chlorophyll a apoprotein A1</fullName>
        <ecNumber evidence="1">1.97.1.12</ecNumber>
    </recommendedName>
    <alternativeName>
        <fullName evidence="1">PSI-A</fullName>
    </alternativeName>
    <alternativeName>
        <fullName evidence="1">PsaA</fullName>
    </alternativeName>
</protein>